<sequence>MPKFAANLSMLFTDVPFLDRFKAAADAGFTSVEYLFPYEYPAPLLAEKLRENGLKQVLFNTAPGNIAAGEWGVSALPDRIEDARRDIDNALEYALALNCPSVLVMGGVVPPGEDRDAYQQTFIDNLRYAADKFAPHGINIMIEALSAKVKPNYLFASQYQALELANLIDRPNIYIQVDFFHAQIVDGNLTQIIHDLDGRIGHIQIASVPARHEPDEGEINYPFIFAELDRVNYSGWIGCEYNPRGKTEDGLGWAEPWLEKKH</sequence>
<protein>
    <recommendedName>
        <fullName evidence="4">2-oxo-tetronate isomerase</fullName>
        <ecNumber evidence="3">5.3.1.35</ecNumber>
    </recommendedName>
    <alternativeName>
        <fullName evidence="5">2-dehydrotetronate isomerase</fullName>
    </alternativeName>
</protein>
<evidence type="ECO:0000250" key="1">
    <source>
        <dbReference type="UniProtKB" id="Q46891"/>
    </source>
</evidence>
<evidence type="ECO:0000250" key="2">
    <source>
        <dbReference type="UniProtKB" id="Q9WYP7"/>
    </source>
</evidence>
<evidence type="ECO:0000269" key="3">
    <source>
    </source>
</evidence>
<evidence type="ECO:0000303" key="4">
    <source>
    </source>
</evidence>
<evidence type="ECO:0000305" key="5"/>
<evidence type="ECO:0000312" key="6">
    <source>
        <dbReference type="EMBL" id="CAG77227.1"/>
    </source>
</evidence>
<reference key="1">
    <citation type="journal article" date="2004" name="Proc. Natl. Acad. Sci. U.S.A.">
        <title>Genome sequence of the enterobacterial phytopathogen Erwinia carotovora subsp. atroseptica and characterization of virulence factors.</title>
        <authorList>
            <person name="Bell K.S."/>
            <person name="Sebaihia M."/>
            <person name="Pritchard L."/>
            <person name="Holden M.T.G."/>
            <person name="Hyman L.J."/>
            <person name="Holeva M.C."/>
            <person name="Thomson N.R."/>
            <person name="Bentley S.D."/>
            <person name="Churcher L.J.C."/>
            <person name="Mungall K."/>
            <person name="Atkin R."/>
            <person name="Bason N."/>
            <person name="Brooks K."/>
            <person name="Chillingworth T."/>
            <person name="Clark K."/>
            <person name="Doggett J."/>
            <person name="Fraser A."/>
            <person name="Hance Z."/>
            <person name="Hauser H."/>
            <person name="Jagels K."/>
            <person name="Moule S."/>
            <person name="Norbertczak H."/>
            <person name="Ormond D."/>
            <person name="Price C."/>
            <person name="Quail M.A."/>
            <person name="Sanders M."/>
            <person name="Walker D."/>
            <person name="Whitehead S."/>
            <person name="Salmond G.P.C."/>
            <person name="Birch P.R.J."/>
            <person name="Parkhill J."/>
            <person name="Toth I.K."/>
        </authorList>
    </citation>
    <scope>NUCLEOTIDE SEQUENCE [LARGE SCALE GENOMIC DNA]</scope>
    <source>
        <strain>SCRI 1043 / ATCC BAA-672</strain>
    </source>
</reference>
<reference key="2">
    <citation type="journal article" date="2016" name="Proc. Natl. Acad. Sci. U.S.A.">
        <title>Assignment of function to a domain of unknown function: DUF1537 is a new kinase family in catabolic pathways for acid sugars.</title>
        <authorList>
            <person name="Zhang X."/>
            <person name="Carter M.S."/>
            <person name="Vetting M.W."/>
            <person name="San Francisco B."/>
            <person name="Zhao S."/>
            <person name="Al-Obaidi N.F."/>
            <person name="Solbiati J.O."/>
            <person name="Thiaville J.J."/>
            <person name="de Crecy-Lagard V."/>
            <person name="Jacobson M.P."/>
            <person name="Almo S.C."/>
            <person name="Gerlt J.A."/>
        </authorList>
    </citation>
    <scope>FUNCTION</scope>
    <scope>CATALYTIC ACTIVITY</scope>
    <source>
        <strain>SCRI 1043 / ATCC BAA-672</strain>
    </source>
</reference>
<feature type="chain" id="PRO_0000439754" description="2-oxo-tetronate isomerase">
    <location>
        <begin position="1"/>
        <end position="262"/>
    </location>
</feature>
<feature type="active site" description="Proton donor/acceptor" evidence="2">
    <location>
        <position position="143"/>
    </location>
</feature>
<feature type="active site" description="Proton donor/acceptor" evidence="2">
    <location>
        <position position="240"/>
    </location>
</feature>
<feature type="binding site" evidence="1">
    <location>
        <position position="143"/>
    </location>
    <ligand>
        <name>Mg(2+)</name>
        <dbReference type="ChEBI" id="CHEBI:18420"/>
    </ligand>
</feature>
<feature type="binding site" evidence="1">
    <location>
        <position position="178"/>
    </location>
    <ligand>
        <name>Mg(2+)</name>
        <dbReference type="ChEBI" id="CHEBI:18420"/>
    </ligand>
</feature>
<feature type="binding site" evidence="1">
    <location>
        <position position="204"/>
    </location>
    <ligand>
        <name>Mg(2+)</name>
        <dbReference type="ChEBI" id="CHEBI:18420"/>
    </ligand>
</feature>
<feature type="binding site" evidence="1">
    <location>
        <position position="240"/>
    </location>
    <ligand>
        <name>Mg(2+)</name>
        <dbReference type="ChEBI" id="CHEBI:18420"/>
    </ligand>
</feature>
<comment type="function">
    <text evidence="3">Catalyzes the isomerization of 2-oxo-tetronate to 3-oxo-tetronate.</text>
</comment>
<comment type="catalytic activity">
    <reaction evidence="3">
        <text>2-dehydro-L-erythronate = 3-dehydro-L-erythronate</text>
        <dbReference type="Rhea" id="RHEA:52564"/>
        <dbReference type="ChEBI" id="CHEBI:136669"/>
        <dbReference type="ChEBI" id="CHEBI:136670"/>
        <dbReference type="EC" id="5.3.1.35"/>
    </reaction>
</comment>
<comment type="catalytic activity">
    <reaction evidence="3">
        <text>2-dehydro-D-erythronate = 3-dehydro-D-erythronate</text>
        <dbReference type="Rhea" id="RHEA:52560"/>
        <dbReference type="ChEBI" id="CHEBI:57958"/>
        <dbReference type="ChEBI" id="CHEBI:136668"/>
        <dbReference type="EC" id="5.3.1.35"/>
    </reaction>
</comment>
<comment type="similarity">
    <text evidence="5">Belongs to the hyi family. OtnI subfamily.</text>
</comment>
<accession>Q6CZ23</accession>
<name>OTNI_PECAS</name>
<dbReference type="EC" id="5.3.1.35" evidence="3"/>
<dbReference type="EMBL" id="BX950851">
    <property type="protein sequence ID" value="CAG77227.1"/>
    <property type="molecule type" value="Genomic_DNA"/>
</dbReference>
<dbReference type="RefSeq" id="WP_011095794.1">
    <property type="nucleotide sequence ID" value="NC_004547.2"/>
</dbReference>
<dbReference type="SMR" id="Q6CZ23"/>
<dbReference type="STRING" id="218491.ECA4330"/>
<dbReference type="GeneID" id="57211023"/>
<dbReference type="KEGG" id="eca:ECA4330"/>
<dbReference type="PATRIC" id="fig|218491.5.peg.4409"/>
<dbReference type="eggNOG" id="COG3622">
    <property type="taxonomic scope" value="Bacteria"/>
</dbReference>
<dbReference type="HOGENOM" id="CLU_050006_1_2_6"/>
<dbReference type="OrthoDB" id="9786584at2"/>
<dbReference type="Proteomes" id="UP000007966">
    <property type="component" value="Chromosome"/>
</dbReference>
<dbReference type="GO" id="GO:0008903">
    <property type="term" value="F:hydroxypyruvate isomerase activity"/>
    <property type="evidence" value="ECO:0007669"/>
    <property type="project" value="TreeGrafter"/>
</dbReference>
<dbReference type="GO" id="GO:0046872">
    <property type="term" value="F:metal ion binding"/>
    <property type="evidence" value="ECO:0007669"/>
    <property type="project" value="UniProtKB-KW"/>
</dbReference>
<dbReference type="GO" id="GO:0046487">
    <property type="term" value="P:glyoxylate metabolic process"/>
    <property type="evidence" value="ECO:0007669"/>
    <property type="project" value="TreeGrafter"/>
</dbReference>
<dbReference type="FunFam" id="3.20.20.150:FF:000007">
    <property type="entry name" value="Hydroxypyruvate isomerase"/>
    <property type="match status" value="1"/>
</dbReference>
<dbReference type="Gene3D" id="3.20.20.150">
    <property type="entry name" value="Divalent-metal-dependent TIM barrel enzymes"/>
    <property type="match status" value="1"/>
</dbReference>
<dbReference type="InterPro" id="IPR053398">
    <property type="entry name" value="HPT_OtnI_isomerases"/>
</dbReference>
<dbReference type="InterPro" id="IPR026040">
    <property type="entry name" value="HyI-like"/>
</dbReference>
<dbReference type="InterPro" id="IPR050417">
    <property type="entry name" value="Sugar_Epim/Isomerase"/>
</dbReference>
<dbReference type="InterPro" id="IPR036237">
    <property type="entry name" value="Xyl_isomerase-like_sf"/>
</dbReference>
<dbReference type="InterPro" id="IPR013022">
    <property type="entry name" value="Xyl_isomerase-like_TIM-brl"/>
</dbReference>
<dbReference type="NCBIfam" id="NF043033">
    <property type="entry name" value="OxoTetrIsom"/>
    <property type="match status" value="1"/>
</dbReference>
<dbReference type="PANTHER" id="PTHR43489:SF6">
    <property type="entry name" value="HYDROXYPYRUVATE ISOMERASE-RELATED"/>
    <property type="match status" value="1"/>
</dbReference>
<dbReference type="PANTHER" id="PTHR43489">
    <property type="entry name" value="ISOMERASE"/>
    <property type="match status" value="1"/>
</dbReference>
<dbReference type="Pfam" id="PF01261">
    <property type="entry name" value="AP_endonuc_2"/>
    <property type="match status" value="1"/>
</dbReference>
<dbReference type="PIRSF" id="PIRSF006241">
    <property type="entry name" value="HyI"/>
    <property type="match status" value="1"/>
</dbReference>
<dbReference type="SUPFAM" id="SSF51658">
    <property type="entry name" value="Xylose isomerase-like"/>
    <property type="match status" value="1"/>
</dbReference>
<keyword id="KW-0119">Carbohydrate metabolism</keyword>
<keyword id="KW-0413">Isomerase</keyword>
<keyword id="KW-0460">Magnesium</keyword>
<keyword id="KW-0479">Metal-binding</keyword>
<keyword id="KW-1185">Reference proteome</keyword>
<gene>
    <name evidence="4" type="primary">otnI</name>
    <name evidence="6" type="ordered locus">ECA4330</name>
</gene>
<organism>
    <name type="scientific">Pectobacterium atrosepticum (strain SCRI 1043 / ATCC BAA-672)</name>
    <name type="common">Erwinia carotovora subsp. atroseptica</name>
    <dbReference type="NCBI Taxonomy" id="218491"/>
    <lineage>
        <taxon>Bacteria</taxon>
        <taxon>Pseudomonadati</taxon>
        <taxon>Pseudomonadota</taxon>
        <taxon>Gammaproteobacteria</taxon>
        <taxon>Enterobacterales</taxon>
        <taxon>Pectobacteriaceae</taxon>
        <taxon>Pectobacterium</taxon>
    </lineage>
</organism>
<proteinExistence type="evidence at protein level"/>